<proteinExistence type="inferred from homology"/>
<organism>
    <name type="scientific">Civettictis civetta</name>
    <name type="common">African civet</name>
    <dbReference type="NCBI Taxonomy" id="94186"/>
    <lineage>
        <taxon>Eukaryota</taxon>
        <taxon>Metazoa</taxon>
        <taxon>Chordata</taxon>
        <taxon>Craniata</taxon>
        <taxon>Vertebrata</taxon>
        <taxon>Euteleostomi</taxon>
        <taxon>Mammalia</taxon>
        <taxon>Eutheria</taxon>
        <taxon>Laurasiatheria</taxon>
        <taxon>Carnivora</taxon>
        <taxon>Feliformia</taxon>
        <taxon>Viverridae</taxon>
        <taxon>Viverrinae</taxon>
        <taxon>Civettictis</taxon>
    </lineage>
</organism>
<name>NU2M_CIVCI</name>
<reference key="1">
    <citation type="journal article" date="2003" name="Nature">
        <title>Single origin of Malagasy Carnivora from an African ancestor.</title>
        <authorList>
            <person name="Yoder A.D."/>
            <person name="Burns M.M."/>
            <person name="Zehr S."/>
            <person name="Delefosse T."/>
            <person name="Veron G."/>
            <person name="Goodman S.M."/>
            <person name="Flynn J.J."/>
        </authorList>
    </citation>
    <scope>NUCLEOTIDE SEQUENCE [GENOMIC DNA]</scope>
</reference>
<comment type="function">
    <text evidence="1">Core subunit of the mitochondrial membrane respiratory chain NADH dehydrogenase (Complex I) which catalyzes electron transfer from NADH through the respiratory chain, using ubiquinone as an electron acceptor. Essential for the catalytic activity and assembly of complex I.</text>
</comment>
<comment type="catalytic activity">
    <reaction evidence="1">
        <text>a ubiquinone + NADH + 5 H(+)(in) = a ubiquinol + NAD(+) + 4 H(+)(out)</text>
        <dbReference type="Rhea" id="RHEA:29091"/>
        <dbReference type="Rhea" id="RHEA-COMP:9565"/>
        <dbReference type="Rhea" id="RHEA-COMP:9566"/>
        <dbReference type="ChEBI" id="CHEBI:15378"/>
        <dbReference type="ChEBI" id="CHEBI:16389"/>
        <dbReference type="ChEBI" id="CHEBI:17976"/>
        <dbReference type="ChEBI" id="CHEBI:57540"/>
        <dbReference type="ChEBI" id="CHEBI:57945"/>
        <dbReference type="EC" id="7.1.1.2"/>
    </reaction>
</comment>
<comment type="subunit">
    <text evidence="1 2">Core subunit of respiratory chain NADH dehydrogenase (Complex I) which is composed of 45 different subunits. Interacts with TMEM242 (By similarity).</text>
</comment>
<comment type="subcellular location">
    <subcellularLocation>
        <location evidence="2">Mitochondrion inner membrane</location>
        <topology evidence="3">Multi-pass membrane protein</topology>
    </subcellularLocation>
</comment>
<comment type="similarity">
    <text evidence="4">Belongs to the complex I subunit 2 family.</text>
</comment>
<evidence type="ECO:0000250" key="1">
    <source>
        <dbReference type="UniProtKB" id="P03891"/>
    </source>
</evidence>
<evidence type="ECO:0000250" key="2">
    <source>
        <dbReference type="UniProtKB" id="P03892"/>
    </source>
</evidence>
<evidence type="ECO:0000255" key="3"/>
<evidence type="ECO:0000305" key="4"/>
<gene>
    <name evidence="1" type="primary">MT-ND2</name>
    <name type="synonym">MTND2</name>
    <name type="synonym">NADH2</name>
    <name type="synonym">ND2</name>
</gene>
<keyword id="KW-0249">Electron transport</keyword>
<keyword id="KW-0472">Membrane</keyword>
<keyword id="KW-0496">Mitochondrion</keyword>
<keyword id="KW-0999">Mitochondrion inner membrane</keyword>
<keyword id="KW-0520">NAD</keyword>
<keyword id="KW-0679">Respiratory chain</keyword>
<keyword id="KW-1278">Translocase</keyword>
<keyword id="KW-0812">Transmembrane</keyword>
<keyword id="KW-1133">Transmembrane helix</keyword>
<keyword id="KW-0813">Transport</keyword>
<keyword id="KW-0830">Ubiquinone</keyword>
<feature type="chain" id="PRO_0000256662" description="NADH-ubiquinone oxidoreductase chain 2">
    <location>
        <begin position="1"/>
        <end position="347"/>
    </location>
</feature>
<feature type="transmembrane region" description="Helical" evidence="3">
    <location>
        <begin position="3"/>
        <end position="23"/>
    </location>
</feature>
<feature type="transmembrane region" description="Helical" evidence="3">
    <location>
        <begin position="25"/>
        <end position="45"/>
    </location>
</feature>
<feature type="transmembrane region" description="Helical" evidence="3">
    <location>
        <begin position="59"/>
        <end position="79"/>
    </location>
</feature>
<feature type="transmembrane region" description="Helical" evidence="3">
    <location>
        <begin position="96"/>
        <end position="116"/>
    </location>
</feature>
<feature type="transmembrane region" description="Helical" evidence="3">
    <location>
        <begin position="122"/>
        <end position="142"/>
    </location>
</feature>
<feature type="transmembrane region" description="Helical" evidence="3">
    <location>
        <begin position="149"/>
        <end position="169"/>
    </location>
</feature>
<feature type="transmembrane region" description="Helical" evidence="3">
    <location>
        <begin position="178"/>
        <end position="198"/>
    </location>
</feature>
<feature type="transmembrane region" description="Helical" evidence="3">
    <location>
        <begin position="201"/>
        <end position="221"/>
    </location>
</feature>
<feature type="transmembrane region" description="Helical" evidence="3">
    <location>
        <begin position="237"/>
        <end position="257"/>
    </location>
</feature>
<feature type="transmembrane region" description="Helical" evidence="3">
    <location>
        <begin position="274"/>
        <end position="294"/>
    </location>
</feature>
<feature type="transmembrane region" description="Helical" evidence="3">
    <location>
        <begin position="323"/>
        <end position="343"/>
    </location>
</feature>
<sequence>MKPPILIIIMSTVILGTMIVMTSSHWMLTWIGFEMNMLAIIPILMKKFNPRAMEASTKYFLTQATASMLLMMGIIINLLHSGQWTVSNNLNPTSSILMTTALAMKLGLAPFHFWVPEVTQGISLSSGMILLTWQKIAPLSVLYQISPTINPNLLLPMAILSVLIGGWGGLNQTQLRKIMAYSSITHMGWMTAILLYNPTMMFLNLIIYITMTLSTFMLFMINSATTTLSLSQTWNKAPLITSLILTLMLSLGGLPPLSGFIPKWMIIQELTKNEMIILPTFLAITALLNLYFYMRLTYTTALTMFPSTNNMKMKWQFENTKKMIFLPPLIITSTMLLPLTPMISILD</sequence>
<protein>
    <recommendedName>
        <fullName evidence="1">NADH-ubiquinone oxidoreductase chain 2</fullName>
        <ecNumber evidence="1">7.1.1.2</ecNumber>
    </recommendedName>
    <alternativeName>
        <fullName>NADH dehydrogenase subunit 2</fullName>
    </alternativeName>
</protein>
<dbReference type="EC" id="7.1.1.2" evidence="1"/>
<dbReference type="EMBL" id="AY170048">
    <property type="protein sequence ID" value="AAN84582.1"/>
    <property type="molecule type" value="Genomic_DNA"/>
</dbReference>
<dbReference type="SMR" id="Q85PQ8"/>
<dbReference type="GO" id="GO:0005743">
    <property type="term" value="C:mitochondrial inner membrane"/>
    <property type="evidence" value="ECO:0000250"/>
    <property type="project" value="UniProtKB"/>
</dbReference>
<dbReference type="GO" id="GO:0008137">
    <property type="term" value="F:NADH dehydrogenase (ubiquinone) activity"/>
    <property type="evidence" value="ECO:0000250"/>
    <property type="project" value="UniProtKB"/>
</dbReference>
<dbReference type="GO" id="GO:0006120">
    <property type="term" value="P:mitochondrial electron transport, NADH to ubiquinone"/>
    <property type="evidence" value="ECO:0000250"/>
    <property type="project" value="UniProtKB"/>
</dbReference>
<dbReference type="GO" id="GO:0032981">
    <property type="term" value="P:mitochondrial respiratory chain complex I assembly"/>
    <property type="evidence" value="ECO:0000250"/>
    <property type="project" value="UniProtKB"/>
</dbReference>
<dbReference type="InterPro" id="IPR050175">
    <property type="entry name" value="Complex_I_Subunit_2"/>
</dbReference>
<dbReference type="InterPro" id="IPR010933">
    <property type="entry name" value="NADH_DH_su2_C"/>
</dbReference>
<dbReference type="InterPro" id="IPR003917">
    <property type="entry name" value="NADH_UbQ_OxRdtase_chain2"/>
</dbReference>
<dbReference type="InterPro" id="IPR001750">
    <property type="entry name" value="ND/Mrp_TM"/>
</dbReference>
<dbReference type="PANTHER" id="PTHR46552">
    <property type="entry name" value="NADH-UBIQUINONE OXIDOREDUCTASE CHAIN 2"/>
    <property type="match status" value="1"/>
</dbReference>
<dbReference type="PANTHER" id="PTHR46552:SF1">
    <property type="entry name" value="NADH-UBIQUINONE OXIDOREDUCTASE CHAIN 2"/>
    <property type="match status" value="1"/>
</dbReference>
<dbReference type="Pfam" id="PF06444">
    <property type="entry name" value="NADH_dehy_S2_C"/>
    <property type="match status" value="1"/>
</dbReference>
<dbReference type="Pfam" id="PF00361">
    <property type="entry name" value="Proton_antipo_M"/>
    <property type="match status" value="1"/>
</dbReference>
<dbReference type="PRINTS" id="PR01436">
    <property type="entry name" value="NADHDHGNASE2"/>
</dbReference>
<accession>Q85PQ8</accession>
<geneLocation type="mitochondrion"/>